<dbReference type="EC" id="3.1.3.11" evidence="1"/>
<dbReference type="EMBL" id="CP000151">
    <property type="protein sequence ID" value="ABB07722.1"/>
    <property type="molecule type" value="Genomic_DNA"/>
</dbReference>
<dbReference type="RefSeq" id="WP_011351300.1">
    <property type="nucleotide sequence ID" value="NC_007510.1"/>
</dbReference>
<dbReference type="SMR" id="Q39IJ4"/>
<dbReference type="GeneID" id="45094025"/>
<dbReference type="KEGG" id="bur:Bcep18194_A4125"/>
<dbReference type="PATRIC" id="fig|482957.22.peg.1011"/>
<dbReference type="HOGENOM" id="CLU_039977_0_0_4"/>
<dbReference type="UniPathway" id="UPA00138"/>
<dbReference type="Proteomes" id="UP000002705">
    <property type="component" value="Chromosome 1"/>
</dbReference>
<dbReference type="GO" id="GO:0005829">
    <property type="term" value="C:cytosol"/>
    <property type="evidence" value="ECO:0007669"/>
    <property type="project" value="TreeGrafter"/>
</dbReference>
<dbReference type="GO" id="GO:0042132">
    <property type="term" value="F:fructose 1,6-bisphosphate 1-phosphatase activity"/>
    <property type="evidence" value="ECO:0007669"/>
    <property type="project" value="UniProtKB-UniRule"/>
</dbReference>
<dbReference type="GO" id="GO:0000287">
    <property type="term" value="F:magnesium ion binding"/>
    <property type="evidence" value="ECO:0007669"/>
    <property type="project" value="UniProtKB-UniRule"/>
</dbReference>
<dbReference type="GO" id="GO:0030388">
    <property type="term" value="P:fructose 1,6-bisphosphate metabolic process"/>
    <property type="evidence" value="ECO:0007669"/>
    <property type="project" value="TreeGrafter"/>
</dbReference>
<dbReference type="GO" id="GO:0006002">
    <property type="term" value="P:fructose 6-phosphate metabolic process"/>
    <property type="evidence" value="ECO:0007669"/>
    <property type="project" value="TreeGrafter"/>
</dbReference>
<dbReference type="GO" id="GO:0006000">
    <property type="term" value="P:fructose metabolic process"/>
    <property type="evidence" value="ECO:0007669"/>
    <property type="project" value="TreeGrafter"/>
</dbReference>
<dbReference type="GO" id="GO:0006094">
    <property type="term" value="P:gluconeogenesis"/>
    <property type="evidence" value="ECO:0007669"/>
    <property type="project" value="UniProtKB-UniRule"/>
</dbReference>
<dbReference type="GO" id="GO:0005986">
    <property type="term" value="P:sucrose biosynthetic process"/>
    <property type="evidence" value="ECO:0007669"/>
    <property type="project" value="TreeGrafter"/>
</dbReference>
<dbReference type="CDD" id="cd00354">
    <property type="entry name" value="FBPase"/>
    <property type="match status" value="1"/>
</dbReference>
<dbReference type="FunFam" id="3.30.540.10:FF:000006">
    <property type="entry name" value="Fructose-1,6-bisphosphatase class 1"/>
    <property type="match status" value="1"/>
</dbReference>
<dbReference type="FunFam" id="3.40.190.80:FF:000011">
    <property type="entry name" value="Fructose-1,6-bisphosphatase class 1"/>
    <property type="match status" value="1"/>
</dbReference>
<dbReference type="Gene3D" id="3.40.190.80">
    <property type="match status" value="1"/>
</dbReference>
<dbReference type="Gene3D" id="3.30.540.10">
    <property type="entry name" value="Fructose-1,6-Bisphosphatase, subunit A, domain 1"/>
    <property type="match status" value="1"/>
</dbReference>
<dbReference type="HAMAP" id="MF_01855">
    <property type="entry name" value="FBPase_class1"/>
    <property type="match status" value="1"/>
</dbReference>
<dbReference type="InterPro" id="IPR044015">
    <property type="entry name" value="FBPase_C_dom"/>
</dbReference>
<dbReference type="InterPro" id="IPR000146">
    <property type="entry name" value="FBPase_class-1"/>
</dbReference>
<dbReference type="InterPro" id="IPR033391">
    <property type="entry name" value="FBPase_N"/>
</dbReference>
<dbReference type="InterPro" id="IPR028343">
    <property type="entry name" value="FBPtase"/>
</dbReference>
<dbReference type="NCBIfam" id="NF006778">
    <property type="entry name" value="PRK09293.1-1"/>
    <property type="match status" value="1"/>
</dbReference>
<dbReference type="NCBIfam" id="NF006779">
    <property type="entry name" value="PRK09293.1-3"/>
    <property type="match status" value="1"/>
</dbReference>
<dbReference type="NCBIfam" id="NF006780">
    <property type="entry name" value="PRK09293.1-4"/>
    <property type="match status" value="1"/>
</dbReference>
<dbReference type="PANTHER" id="PTHR11556">
    <property type="entry name" value="FRUCTOSE-1,6-BISPHOSPHATASE-RELATED"/>
    <property type="match status" value="1"/>
</dbReference>
<dbReference type="PANTHER" id="PTHR11556:SF35">
    <property type="entry name" value="SEDOHEPTULOSE-1,7-BISPHOSPHATASE, CHLOROPLASTIC"/>
    <property type="match status" value="1"/>
</dbReference>
<dbReference type="Pfam" id="PF00316">
    <property type="entry name" value="FBPase"/>
    <property type="match status" value="1"/>
</dbReference>
<dbReference type="Pfam" id="PF18913">
    <property type="entry name" value="FBPase_C"/>
    <property type="match status" value="1"/>
</dbReference>
<dbReference type="PIRSF" id="PIRSF500210">
    <property type="entry name" value="FBPtase"/>
    <property type="match status" value="1"/>
</dbReference>
<dbReference type="PIRSF" id="PIRSF000904">
    <property type="entry name" value="FBPtase_SBPase"/>
    <property type="match status" value="1"/>
</dbReference>
<dbReference type="PRINTS" id="PR00115">
    <property type="entry name" value="F16BPHPHTASE"/>
</dbReference>
<dbReference type="SUPFAM" id="SSF56655">
    <property type="entry name" value="Carbohydrate phosphatase"/>
    <property type="match status" value="1"/>
</dbReference>
<feature type="chain" id="PRO_0000364503" description="Fructose-1,6-bisphosphatase class 1">
    <location>
        <begin position="1"/>
        <end position="337"/>
    </location>
</feature>
<feature type="binding site" evidence="1">
    <location>
        <position position="94"/>
    </location>
    <ligand>
        <name>Mg(2+)</name>
        <dbReference type="ChEBI" id="CHEBI:18420"/>
        <label>1</label>
    </ligand>
</feature>
<feature type="binding site" evidence="1">
    <location>
        <position position="116"/>
    </location>
    <ligand>
        <name>Mg(2+)</name>
        <dbReference type="ChEBI" id="CHEBI:18420"/>
        <label>1</label>
    </ligand>
</feature>
<feature type="binding site" evidence="1">
    <location>
        <position position="116"/>
    </location>
    <ligand>
        <name>Mg(2+)</name>
        <dbReference type="ChEBI" id="CHEBI:18420"/>
        <label>2</label>
    </ligand>
</feature>
<feature type="binding site" evidence="1">
    <location>
        <position position="118"/>
    </location>
    <ligand>
        <name>Mg(2+)</name>
        <dbReference type="ChEBI" id="CHEBI:18420"/>
        <label>1</label>
    </ligand>
</feature>
<feature type="binding site" evidence="1">
    <location>
        <begin position="119"/>
        <end position="122"/>
    </location>
    <ligand>
        <name>substrate</name>
    </ligand>
</feature>
<feature type="binding site" evidence="1">
    <location>
        <position position="119"/>
    </location>
    <ligand>
        <name>Mg(2+)</name>
        <dbReference type="ChEBI" id="CHEBI:18420"/>
        <label>2</label>
    </ligand>
</feature>
<feature type="binding site" evidence="1">
    <location>
        <position position="210"/>
    </location>
    <ligand>
        <name>substrate</name>
    </ligand>
</feature>
<feature type="binding site" evidence="1">
    <location>
        <position position="276"/>
    </location>
    <ligand>
        <name>substrate</name>
    </ligand>
</feature>
<feature type="binding site" evidence="1">
    <location>
        <position position="282"/>
    </location>
    <ligand>
        <name>Mg(2+)</name>
        <dbReference type="ChEBI" id="CHEBI:18420"/>
        <label>2</label>
    </ligand>
</feature>
<evidence type="ECO:0000255" key="1">
    <source>
        <dbReference type="HAMAP-Rule" id="MF_01855"/>
    </source>
</evidence>
<accession>Q39IJ4</accession>
<protein>
    <recommendedName>
        <fullName evidence="1">Fructose-1,6-bisphosphatase class 1</fullName>
        <shortName evidence="1">FBPase class 1</shortName>
        <ecNumber evidence="1">3.1.3.11</ecNumber>
    </recommendedName>
    <alternativeName>
        <fullName evidence="1">D-fructose-1,6-bisphosphate 1-phosphohydrolase class 1</fullName>
    </alternativeName>
</protein>
<reference key="1">
    <citation type="submission" date="2005-10" db="EMBL/GenBank/DDBJ databases">
        <title>Complete sequence of chromosome 1 of Burkholderia sp. 383.</title>
        <authorList>
            <consortium name="US DOE Joint Genome Institute"/>
            <person name="Copeland A."/>
            <person name="Lucas S."/>
            <person name="Lapidus A."/>
            <person name="Barry K."/>
            <person name="Detter J.C."/>
            <person name="Glavina T."/>
            <person name="Hammon N."/>
            <person name="Israni S."/>
            <person name="Pitluck S."/>
            <person name="Chain P."/>
            <person name="Malfatti S."/>
            <person name="Shin M."/>
            <person name="Vergez L."/>
            <person name="Schmutz J."/>
            <person name="Larimer F."/>
            <person name="Land M."/>
            <person name="Kyrpides N."/>
            <person name="Lykidis A."/>
            <person name="Richardson P."/>
        </authorList>
    </citation>
    <scope>NUCLEOTIDE SEQUENCE [LARGE SCALE GENOMIC DNA]</scope>
    <source>
        <strain>ATCC 17760 / DSM 23089 / LMG 22485 / NCIMB 9086 / R18194 / 383</strain>
    </source>
</reference>
<sequence>MSIARRTTLSKFLIEQQRETNNLPADLRLLIEVVARACKAISYNVSKGALGEALGTAGSENVQGEVQKKLDILSNEILLDANEWGGNLAAMASEEMETFFPIPANYPRGEYLLVFDPLDGSSNIDVNVSIGTIFSVLRCPDGKQATEESFLQPGTQQVAAGYAVYGPQTVFVLTTGNGVNCFTLDREVGSWVLTQSNMQIPADTREYAINASNARHWYDPVKRYVDELNAGKDGPRGDNFNMRWIASMVSDVHRILNRGGVFMYPADKRTPDRPGKLRLMYEANPMSFIVEQAGGAATTGTQRIMEVQPTGLHQRVPVFLGSKNEVDRVTGYHQEKQ</sequence>
<proteinExistence type="inferred from homology"/>
<name>F16PA_BURL3</name>
<gene>
    <name evidence="1" type="primary">fbp</name>
    <name type="ordered locus">Bcep18194_A4125</name>
</gene>
<keyword id="KW-0119">Carbohydrate metabolism</keyword>
<keyword id="KW-0963">Cytoplasm</keyword>
<keyword id="KW-0378">Hydrolase</keyword>
<keyword id="KW-0460">Magnesium</keyword>
<keyword id="KW-0479">Metal-binding</keyword>
<organism>
    <name type="scientific">Burkholderia lata (strain ATCC 17760 / DSM 23089 / LMG 22485 / NCIMB 9086 / R18194 / 383)</name>
    <dbReference type="NCBI Taxonomy" id="482957"/>
    <lineage>
        <taxon>Bacteria</taxon>
        <taxon>Pseudomonadati</taxon>
        <taxon>Pseudomonadota</taxon>
        <taxon>Betaproteobacteria</taxon>
        <taxon>Burkholderiales</taxon>
        <taxon>Burkholderiaceae</taxon>
        <taxon>Burkholderia</taxon>
        <taxon>Burkholderia cepacia complex</taxon>
    </lineage>
</organism>
<comment type="catalytic activity">
    <reaction evidence="1">
        <text>beta-D-fructose 1,6-bisphosphate + H2O = beta-D-fructose 6-phosphate + phosphate</text>
        <dbReference type="Rhea" id="RHEA:11064"/>
        <dbReference type="ChEBI" id="CHEBI:15377"/>
        <dbReference type="ChEBI" id="CHEBI:32966"/>
        <dbReference type="ChEBI" id="CHEBI:43474"/>
        <dbReference type="ChEBI" id="CHEBI:57634"/>
        <dbReference type="EC" id="3.1.3.11"/>
    </reaction>
</comment>
<comment type="cofactor">
    <cofactor evidence="1">
        <name>Mg(2+)</name>
        <dbReference type="ChEBI" id="CHEBI:18420"/>
    </cofactor>
    <text evidence="1">Binds 2 magnesium ions per subunit.</text>
</comment>
<comment type="pathway">
    <text evidence="1">Carbohydrate biosynthesis; gluconeogenesis.</text>
</comment>
<comment type="subunit">
    <text evidence="1">Homotetramer.</text>
</comment>
<comment type="subcellular location">
    <subcellularLocation>
        <location evidence="1">Cytoplasm</location>
    </subcellularLocation>
</comment>
<comment type="similarity">
    <text evidence="1">Belongs to the FBPase class 1 family.</text>
</comment>